<feature type="chain" id="PRO_0000137297" description="Probable translation initiation factor IF-2">
    <location>
        <begin position="1"/>
        <end position="617"/>
    </location>
</feature>
<feature type="domain" description="tr-type G">
    <location>
        <begin position="14"/>
        <end position="231"/>
    </location>
</feature>
<feature type="region of interest" description="G1" evidence="1">
    <location>
        <begin position="23"/>
        <end position="30"/>
    </location>
</feature>
<feature type="region of interest" description="G2" evidence="1">
    <location>
        <begin position="48"/>
        <end position="52"/>
    </location>
</feature>
<feature type="region of interest" description="G3" evidence="1">
    <location>
        <begin position="87"/>
        <end position="90"/>
    </location>
</feature>
<feature type="region of interest" description="G4" evidence="1">
    <location>
        <begin position="141"/>
        <end position="144"/>
    </location>
</feature>
<feature type="region of interest" description="G5" evidence="1">
    <location>
        <begin position="209"/>
        <end position="211"/>
    </location>
</feature>
<feature type="binding site" evidence="1">
    <location>
        <begin position="23"/>
        <end position="30"/>
    </location>
    <ligand>
        <name>GTP</name>
        <dbReference type="ChEBI" id="CHEBI:37565"/>
    </ligand>
</feature>
<feature type="binding site" evidence="1">
    <location>
        <begin position="87"/>
        <end position="91"/>
    </location>
    <ligand>
        <name>GTP</name>
        <dbReference type="ChEBI" id="CHEBI:37565"/>
    </ligand>
</feature>
<feature type="binding site" evidence="1">
    <location>
        <begin position="141"/>
        <end position="144"/>
    </location>
    <ligand>
        <name>GTP</name>
        <dbReference type="ChEBI" id="CHEBI:37565"/>
    </ligand>
</feature>
<feature type="strand" evidence="4">
    <location>
        <begin position="18"/>
        <end position="23"/>
    </location>
</feature>
<feature type="helix" evidence="4">
    <location>
        <begin position="29"/>
        <end position="42"/>
    </location>
</feature>
<feature type="strand" evidence="4">
    <location>
        <begin position="50"/>
        <end position="52"/>
    </location>
</feature>
<feature type="strand" evidence="4">
    <location>
        <begin position="55"/>
        <end position="59"/>
    </location>
</feature>
<feature type="helix" evidence="4">
    <location>
        <begin position="60"/>
        <end position="66"/>
    </location>
</feature>
<feature type="helix" evidence="4">
    <location>
        <begin position="68"/>
        <end position="70"/>
    </location>
</feature>
<feature type="turn" evidence="4">
    <location>
        <begin position="71"/>
        <end position="73"/>
    </location>
</feature>
<feature type="strand" evidence="4">
    <location>
        <begin position="82"/>
        <end position="88"/>
    </location>
</feature>
<feature type="helix" evidence="4">
    <location>
        <begin position="91"/>
        <end position="95"/>
    </location>
</feature>
<feature type="strand" evidence="3">
    <location>
        <begin position="97"/>
        <end position="99"/>
    </location>
</feature>
<feature type="strand" evidence="3">
    <location>
        <begin position="102"/>
        <end position="104"/>
    </location>
</feature>
<feature type="strand" evidence="4">
    <location>
        <begin position="106"/>
        <end position="113"/>
    </location>
</feature>
<feature type="turn" evidence="4">
    <location>
        <begin position="114"/>
        <end position="116"/>
    </location>
</feature>
<feature type="helix" evidence="4">
    <location>
        <begin position="120"/>
        <end position="132"/>
    </location>
</feature>
<feature type="strand" evidence="4">
    <location>
        <begin position="136"/>
        <end position="141"/>
    </location>
</feature>
<feature type="helix" evidence="4">
    <location>
        <begin position="143"/>
        <end position="145"/>
    </location>
</feature>
<feature type="helix" evidence="4">
    <location>
        <begin position="157"/>
        <end position="162"/>
    </location>
</feature>
<feature type="helix" evidence="4">
    <location>
        <begin position="166"/>
        <end position="185"/>
    </location>
</feature>
<feature type="strand" evidence="4">
    <location>
        <begin position="190"/>
        <end position="192"/>
    </location>
</feature>
<feature type="helix" evidence="4">
    <location>
        <begin position="193"/>
        <end position="195"/>
    </location>
</feature>
<feature type="turn" evidence="4">
    <location>
        <begin position="199"/>
        <end position="201"/>
    </location>
</feature>
<feature type="strand" evidence="4">
    <location>
        <begin position="202"/>
        <end position="207"/>
    </location>
</feature>
<feature type="turn" evidence="4">
    <location>
        <begin position="210"/>
        <end position="212"/>
    </location>
</feature>
<feature type="helix" evidence="4">
    <location>
        <begin position="216"/>
        <end position="230"/>
    </location>
</feature>
<feature type="helix" evidence="4">
    <location>
        <begin position="232"/>
        <end position="235"/>
    </location>
</feature>
<feature type="strand" evidence="4">
    <location>
        <begin position="243"/>
        <end position="252"/>
    </location>
</feature>
<feature type="turn" evidence="4">
    <location>
        <begin position="253"/>
        <end position="255"/>
    </location>
</feature>
<feature type="strand" evidence="4">
    <location>
        <begin position="256"/>
        <end position="269"/>
    </location>
</feature>
<feature type="strand" evidence="4">
    <location>
        <begin position="273"/>
        <end position="278"/>
    </location>
</feature>
<feature type="strand" evidence="4">
    <location>
        <begin position="281"/>
        <end position="286"/>
    </location>
</feature>
<feature type="strand" evidence="4">
    <location>
        <begin position="289"/>
        <end position="292"/>
    </location>
</feature>
<feature type="helix" evidence="3">
    <location>
        <begin position="299"/>
        <end position="301"/>
    </location>
</feature>
<feature type="strand" evidence="4">
    <location>
        <begin position="307"/>
        <end position="321"/>
    </location>
</feature>
<feature type="strand" evidence="4">
    <location>
        <begin position="333"/>
        <end position="339"/>
    </location>
</feature>
<feature type="helix" evidence="4">
    <location>
        <begin position="340"/>
        <end position="357"/>
    </location>
</feature>
<feature type="strand" evidence="3">
    <location>
        <begin position="358"/>
        <end position="360"/>
    </location>
</feature>
<feature type="strand" evidence="3">
    <location>
        <begin position="362"/>
        <end position="364"/>
    </location>
</feature>
<feature type="strand" evidence="3">
    <location>
        <begin position="366"/>
        <end position="372"/>
    </location>
</feature>
<feature type="helix" evidence="3">
    <location>
        <begin position="373"/>
        <end position="386"/>
    </location>
</feature>
<feature type="strand" evidence="3">
    <location>
        <begin position="390"/>
        <end position="398"/>
    </location>
</feature>
<feature type="helix" evidence="3">
    <location>
        <begin position="400"/>
        <end position="412"/>
    </location>
</feature>
<feature type="helix" evidence="3">
    <location>
        <begin position="414"/>
        <end position="416"/>
    </location>
</feature>
<feature type="strand" evidence="3">
    <location>
        <begin position="418"/>
        <end position="423"/>
    </location>
</feature>
<feature type="helix" evidence="3">
    <location>
        <begin position="428"/>
        <end position="437"/>
    </location>
</feature>
<feature type="strand" evidence="3">
    <location>
        <begin position="440"/>
        <end position="446"/>
    </location>
</feature>
<feature type="helix" evidence="3">
    <location>
        <begin position="447"/>
        <end position="470"/>
    </location>
</feature>
<feature type="strand" evidence="3">
    <location>
        <begin position="477"/>
        <end position="504"/>
    </location>
</feature>
<feature type="strand" evidence="3">
    <location>
        <begin position="509"/>
        <end position="511"/>
    </location>
</feature>
<feature type="strand" evidence="3">
    <location>
        <begin position="517"/>
        <end position="525"/>
    </location>
</feature>
<feature type="strand" evidence="3">
    <location>
        <begin position="539"/>
        <end position="547"/>
    </location>
</feature>
<feature type="turn" evidence="3">
    <location>
        <begin position="550"/>
        <end position="552"/>
    </location>
</feature>
<feature type="strand" evidence="3">
    <location>
        <begin position="559"/>
        <end position="562"/>
    </location>
</feature>
<feature type="helix" evidence="3">
    <location>
        <begin position="566"/>
        <end position="575"/>
    </location>
</feature>
<feature type="turn" evidence="3">
    <location>
        <begin position="577"/>
        <end position="579"/>
    </location>
</feature>
<feature type="helix" evidence="3">
    <location>
        <begin position="582"/>
        <end position="597"/>
    </location>
</feature>
<feature type="helix" evidence="3">
    <location>
        <begin position="601"/>
        <end position="609"/>
    </location>
</feature>
<name>IF2P_AERPE</name>
<keyword id="KW-0002">3D-structure</keyword>
<keyword id="KW-0342">GTP-binding</keyword>
<keyword id="KW-0396">Initiation factor</keyword>
<keyword id="KW-0547">Nucleotide-binding</keyword>
<keyword id="KW-0648">Protein biosynthesis</keyword>
<keyword id="KW-1185">Reference proteome</keyword>
<reference key="1">
    <citation type="journal article" date="1999" name="DNA Res.">
        <title>Complete genome sequence of an aerobic hyper-thermophilic crenarchaeon, Aeropyrum pernix K1.</title>
        <authorList>
            <person name="Kawarabayasi Y."/>
            <person name="Hino Y."/>
            <person name="Horikawa H."/>
            <person name="Yamazaki S."/>
            <person name="Haikawa Y."/>
            <person name="Jin-no K."/>
            <person name="Takahashi M."/>
            <person name="Sekine M."/>
            <person name="Baba S."/>
            <person name="Ankai A."/>
            <person name="Kosugi H."/>
            <person name="Hosoyama A."/>
            <person name="Fukui S."/>
            <person name="Nagai Y."/>
            <person name="Nishijima K."/>
            <person name="Nakazawa H."/>
            <person name="Takamiya M."/>
            <person name="Masuda S."/>
            <person name="Funahashi T."/>
            <person name="Tanaka T."/>
            <person name="Kudoh Y."/>
            <person name="Yamazaki J."/>
            <person name="Kushida N."/>
            <person name="Oguchi A."/>
            <person name="Aoki K."/>
            <person name="Kubota K."/>
            <person name="Nakamura Y."/>
            <person name="Nomura N."/>
            <person name="Sako Y."/>
            <person name="Kikuchi H."/>
        </authorList>
    </citation>
    <scope>NUCLEOTIDE SEQUENCE [LARGE SCALE GENOMIC DNA]</scope>
    <source>
        <strain>ATCC 700893 / DSM 11879 / JCM 9820 / NBRC 100138 / K1</strain>
    </source>
</reference>
<protein>
    <recommendedName>
        <fullName>Probable translation initiation factor IF-2</fullName>
    </recommendedName>
</protein>
<organism>
    <name type="scientific">Aeropyrum pernix (strain ATCC 700893 / DSM 11879 / JCM 9820 / NBRC 100138 / K1)</name>
    <dbReference type="NCBI Taxonomy" id="272557"/>
    <lineage>
        <taxon>Archaea</taxon>
        <taxon>Thermoproteota</taxon>
        <taxon>Thermoprotei</taxon>
        <taxon>Desulfurococcales</taxon>
        <taxon>Desulfurococcaceae</taxon>
        <taxon>Aeropyrum</taxon>
    </lineage>
</organism>
<gene>
    <name type="primary">infB</name>
    <name type="ordered locus">APE_2374</name>
</gene>
<sequence length="617" mass="68521">MAGDKGGGDGERRLRQPIVVVLGHVDHGKTTLLDKIRRTAVAAKEAGGITQHIGASIVPADVIEKIAEPLKKVIPVKLVIPGLLFIDTPGHELFSNLRRRGGSVADFAILVVDIMEGFKPQTYEALELLKERRVPFLIAANKIDRIPGWKPNPDAPFIETIRRQDPKVREILEQRVYEIVGKMYEAGLPAELFTRIKDFRRKIAIVPVSARTGEGIPELLAVLAGLTQTYLKERLRYAEGPAKGVVLEVKEMQGFGTVVDAVIYDGVLKKEDIIVVGGREGPIVTRVRALLMPAPLQDIRSREARFVQVDRVYAAAGVRIAAPGLDDVIAGSPIYAAESEEEARKLMEAVQREIEELRFRTENIGVVVKADTLGTLEALVEALRRRGVPVRLADIGPVSRSDVLDAAVTRKIDPYLGVVLAFNVKVLPEAEEEASRAGVKIFRESMIYKLIEDYEEWVKKEKEAERLKALNSLIRPGKFRILPGYVFRRSDPAIVGVEVLGGVIRPGYPVMDSQGRELGRIMAIKDRDRSLEEARLGAAVAVSIQGRILIGRHANEGDILYTNVPAQHAYKILTEFKDLVSKDELDVLREIAEIKRRAADHEYNKVLLRLKIKRVSQ</sequence>
<comment type="function">
    <text evidence="1">Function in general translation initiation by promoting the binding of the formylmethionine-tRNA to ribosomes. Seems to function along with eIF-2 (By similarity).</text>
</comment>
<comment type="similarity">
    <text evidence="2">Belongs to the TRAFAC class translation factor GTPase superfamily. Classic translation factor GTPase family. IF-2 subfamily.</text>
</comment>
<evidence type="ECO:0000250" key="1"/>
<evidence type="ECO:0000305" key="2"/>
<evidence type="ECO:0007829" key="3">
    <source>
        <dbReference type="PDB" id="5FG3"/>
    </source>
</evidence>
<evidence type="ECO:0007829" key="4">
    <source>
        <dbReference type="PDB" id="5YT0"/>
    </source>
</evidence>
<accession>Q9Y9B3</accession>
<proteinExistence type="evidence at protein level"/>
<dbReference type="EMBL" id="BA000002">
    <property type="protein sequence ID" value="BAA81387.1"/>
    <property type="molecule type" value="Genomic_DNA"/>
</dbReference>
<dbReference type="PIR" id="C72466">
    <property type="entry name" value="C72466"/>
</dbReference>
<dbReference type="RefSeq" id="WP_010866970.1">
    <property type="nucleotide sequence ID" value="NC_000854.2"/>
</dbReference>
<dbReference type="PDB" id="5FG3">
    <property type="method" value="X-ray"/>
    <property type="resolution" value="1.90 A"/>
    <property type="chains" value="A=1-617"/>
</dbReference>
<dbReference type="PDB" id="5YT0">
    <property type="method" value="X-ray"/>
    <property type="resolution" value="1.89 A"/>
    <property type="chains" value="A=1-358"/>
</dbReference>
<dbReference type="PDBsum" id="5FG3"/>
<dbReference type="PDBsum" id="5YT0"/>
<dbReference type="SMR" id="Q9Y9B3"/>
<dbReference type="STRING" id="272557.APE_2374"/>
<dbReference type="EnsemblBacteria" id="BAA81387">
    <property type="protein sequence ID" value="BAA81387"/>
    <property type="gene ID" value="APE_2374"/>
</dbReference>
<dbReference type="GeneID" id="1445380"/>
<dbReference type="KEGG" id="ape:APE_2374"/>
<dbReference type="PATRIC" id="fig|272557.25.peg.1584"/>
<dbReference type="eggNOG" id="arCOG01560">
    <property type="taxonomic scope" value="Archaea"/>
</dbReference>
<dbReference type="Proteomes" id="UP000002518">
    <property type="component" value="Chromosome"/>
</dbReference>
<dbReference type="GO" id="GO:0005737">
    <property type="term" value="C:cytoplasm"/>
    <property type="evidence" value="ECO:0007669"/>
    <property type="project" value="TreeGrafter"/>
</dbReference>
<dbReference type="GO" id="GO:0005525">
    <property type="term" value="F:GTP binding"/>
    <property type="evidence" value="ECO:0007669"/>
    <property type="project" value="UniProtKB-KW"/>
</dbReference>
<dbReference type="GO" id="GO:0003924">
    <property type="term" value="F:GTPase activity"/>
    <property type="evidence" value="ECO:0007669"/>
    <property type="project" value="UniProtKB-UniRule"/>
</dbReference>
<dbReference type="GO" id="GO:0003743">
    <property type="term" value="F:translation initiation factor activity"/>
    <property type="evidence" value="ECO:0007669"/>
    <property type="project" value="UniProtKB-UniRule"/>
</dbReference>
<dbReference type="CDD" id="cd03703">
    <property type="entry name" value="aeIF5B_II"/>
    <property type="match status" value="1"/>
</dbReference>
<dbReference type="CDD" id="cd16266">
    <property type="entry name" value="IF2_aeIF5B_IV"/>
    <property type="match status" value="1"/>
</dbReference>
<dbReference type="CDD" id="cd01887">
    <property type="entry name" value="IF2_eIF5B"/>
    <property type="match status" value="1"/>
</dbReference>
<dbReference type="FunFam" id="3.40.50.300:FF:000112">
    <property type="entry name" value="Eukaryotic translation initiation factor 5B"/>
    <property type="match status" value="1"/>
</dbReference>
<dbReference type="FunFam" id="2.40.30.10:FF:000013">
    <property type="entry name" value="eukaryotic translation initiation factor 5B"/>
    <property type="match status" value="1"/>
</dbReference>
<dbReference type="FunFam" id="3.40.50.10050:FF:000001">
    <property type="entry name" value="Translation initiation factor IF-2"/>
    <property type="match status" value="1"/>
</dbReference>
<dbReference type="Gene3D" id="3.40.50.300">
    <property type="entry name" value="P-loop containing nucleotide triphosphate hydrolases"/>
    <property type="match status" value="1"/>
</dbReference>
<dbReference type="Gene3D" id="2.40.30.10">
    <property type="entry name" value="Translation factors"/>
    <property type="match status" value="2"/>
</dbReference>
<dbReference type="Gene3D" id="3.40.50.10050">
    <property type="entry name" value="Translation initiation factor IF- 2, domain 3"/>
    <property type="match status" value="1"/>
</dbReference>
<dbReference type="HAMAP" id="MF_00100_A">
    <property type="entry name" value="IF_2_A"/>
    <property type="match status" value="1"/>
</dbReference>
<dbReference type="InterPro" id="IPR004161">
    <property type="entry name" value="EFTu-like_2"/>
</dbReference>
<dbReference type="InterPro" id="IPR029459">
    <property type="entry name" value="EFTU-type"/>
</dbReference>
<dbReference type="InterPro" id="IPR027417">
    <property type="entry name" value="P-loop_NTPase"/>
</dbReference>
<dbReference type="InterPro" id="IPR005225">
    <property type="entry name" value="Small_GTP-bd"/>
</dbReference>
<dbReference type="InterPro" id="IPR000795">
    <property type="entry name" value="T_Tr_GTP-bd_dom"/>
</dbReference>
<dbReference type="InterPro" id="IPR004544">
    <property type="entry name" value="TF_aIF-2_arc"/>
</dbReference>
<dbReference type="InterPro" id="IPR015760">
    <property type="entry name" value="TIF_IF2"/>
</dbReference>
<dbReference type="InterPro" id="IPR023115">
    <property type="entry name" value="TIF_IF2_dom3"/>
</dbReference>
<dbReference type="InterPro" id="IPR036925">
    <property type="entry name" value="TIF_IF2_dom3_sf"/>
</dbReference>
<dbReference type="InterPro" id="IPR009000">
    <property type="entry name" value="Transl_B-barrel_sf"/>
</dbReference>
<dbReference type="NCBIfam" id="TIGR00491">
    <property type="entry name" value="aIF-2"/>
    <property type="match status" value="1"/>
</dbReference>
<dbReference type="NCBIfam" id="NF003078">
    <property type="entry name" value="PRK04004.1"/>
    <property type="match status" value="1"/>
</dbReference>
<dbReference type="NCBIfam" id="NF011418">
    <property type="entry name" value="PRK14845.1"/>
    <property type="match status" value="1"/>
</dbReference>
<dbReference type="NCBIfam" id="TIGR00231">
    <property type="entry name" value="small_GTP"/>
    <property type="match status" value="1"/>
</dbReference>
<dbReference type="PANTHER" id="PTHR43381:SF4">
    <property type="entry name" value="EUKARYOTIC TRANSLATION INITIATION FACTOR 5B"/>
    <property type="match status" value="1"/>
</dbReference>
<dbReference type="PANTHER" id="PTHR43381">
    <property type="entry name" value="TRANSLATION INITIATION FACTOR IF-2-RELATED"/>
    <property type="match status" value="1"/>
</dbReference>
<dbReference type="Pfam" id="PF00009">
    <property type="entry name" value="GTP_EFTU"/>
    <property type="match status" value="1"/>
</dbReference>
<dbReference type="Pfam" id="PF03144">
    <property type="entry name" value="GTP_EFTU_D2"/>
    <property type="match status" value="1"/>
</dbReference>
<dbReference type="Pfam" id="PF14578">
    <property type="entry name" value="GTP_EFTU_D4"/>
    <property type="match status" value="1"/>
</dbReference>
<dbReference type="Pfam" id="PF11987">
    <property type="entry name" value="IF-2"/>
    <property type="match status" value="1"/>
</dbReference>
<dbReference type="PRINTS" id="PR00315">
    <property type="entry name" value="ELONGATNFCT"/>
</dbReference>
<dbReference type="SUPFAM" id="SSF52156">
    <property type="entry name" value="Initiation factor IF2/eIF5b, domain 3"/>
    <property type="match status" value="1"/>
</dbReference>
<dbReference type="SUPFAM" id="SSF52540">
    <property type="entry name" value="P-loop containing nucleoside triphosphate hydrolases"/>
    <property type="match status" value="1"/>
</dbReference>
<dbReference type="SUPFAM" id="SSF50447">
    <property type="entry name" value="Translation proteins"/>
    <property type="match status" value="1"/>
</dbReference>
<dbReference type="PROSITE" id="PS51722">
    <property type="entry name" value="G_TR_2"/>
    <property type="match status" value="1"/>
</dbReference>